<name>MUTL_ERWT9</name>
<keyword id="KW-0227">DNA damage</keyword>
<keyword id="KW-0234">DNA repair</keyword>
<keyword id="KW-1185">Reference proteome</keyword>
<dbReference type="EMBL" id="CU468135">
    <property type="protein sequence ID" value="CAO98015.1"/>
    <property type="molecule type" value="Genomic_DNA"/>
</dbReference>
<dbReference type="RefSeq" id="WP_012442667.1">
    <property type="nucleotide sequence ID" value="NC_010694.1"/>
</dbReference>
<dbReference type="SMR" id="B2VCU8"/>
<dbReference type="STRING" id="465817.ETA_29690"/>
<dbReference type="KEGG" id="eta:ETA_29690"/>
<dbReference type="eggNOG" id="COG0323">
    <property type="taxonomic scope" value="Bacteria"/>
</dbReference>
<dbReference type="HOGENOM" id="CLU_004131_5_1_6"/>
<dbReference type="OrthoDB" id="9763467at2"/>
<dbReference type="Proteomes" id="UP000001726">
    <property type="component" value="Chromosome"/>
</dbReference>
<dbReference type="GO" id="GO:0032300">
    <property type="term" value="C:mismatch repair complex"/>
    <property type="evidence" value="ECO:0007669"/>
    <property type="project" value="InterPro"/>
</dbReference>
<dbReference type="GO" id="GO:0005524">
    <property type="term" value="F:ATP binding"/>
    <property type="evidence" value="ECO:0007669"/>
    <property type="project" value="InterPro"/>
</dbReference>
<dbReference type="GO" id="GO:0016887">
    <property type="term" value="F:ATP hydrolysis activity"/>
    <property type="evidence" value="ECO:0007669"/>
    <property type="project" value="InterPro"/>
</dbReference>
<dbReference type="GO" id="GO:0140664">
    <property type="term" value="F:ATP-dependent DNA damage sensor activity"/>
    <property type="evidence" value="ECO:0007669"/>
    <property type="project" value="InterPro"/>
</dbReference>
<dbReference type="GO" id="GO:0030983">
    <property type="term" value="F:mismatched DNA binding"/>
    <property type="evidence" value="ECO:0007669"/>
    <property type="project" value="InterPro"/>
</dbReference>
<dbReference type="GO" id="GO:0006298">
    <property type="term" value="P:mismatch repair"/>
    <property type="evidence" value="ECO:0007669"/>
    <property type="project" value="UniProtKB-UniRule"/>
</dbReference>
<dbReference type="CDD" id="cd16926">
    <property type="entry name" value="HATPase_MutL-MLH-PMS-like"/>
    <property type="match status" value="1"/>
</dbReference>
<dbReference type="CDD" id="cd03482">
    <property type="entry name" value="MutL_Trans_MutL"/>
    <property type="match status" value="1"/>
</dbReference>
<dbReference type="FunFam" id="3.30.230.10:FF:000013">
    <property type="entry name" value="DNA mismatch repair endonuclease MutL"/>
    <property type="match status" value="1"/>
</dbReference>
<dbReference type="FunFam" id="3.30.565.10:FF:000003">
    <property type="entry name" value="DNA mismatch repair endonuclease MutL"/>
    <property type="match status" value="1"/>
</dbReference>
<dbReference type="Gene3D" id="3.30.230.10">
    <property type="match status" value="1"/>
</dbReference>
<dbReference type="Gene3D" id="3.30.565.10">
    <property type="entry name" value="Histidine kinase-like ATPase, C-terminal domain"/>
    <property type="match status" value="1"/>
</dbReference>
<dbReference type="Gene3D" id="3.30.1540.20">
    <property type="entry name" value="MutL, C-terminal domain, dimerisation subdomain"/>
    <property type="match status" value="1"/>
</dbReference>
<dbReference type="Gene3D" id="3.30.1370.100">
    <property type="entry name" value="MutL, C-terminal domain, regulatory subdomain"/>
    <property type="match status" value="1"/>
</dbReference>
<dbReference type="HAMAP" id="MF_00149">
    <property type="entry name" value="DNA_mis_repair"/>
    <property type="match status" value="1"/>
</dbReference>
<dbReference type="InterPro" id="IPR014762">
    <property type="entry name" value="DNA_mismatch_repair_CS"/>
</dbReference>
<dbReference type="InterPro" id="IPR020667">
    <property type="entry name" value="DNA_mismatch_repair_MutL"/>
</dbReference>
<dbReference type="InterPro" id="IPR013507">
    <property type="entry name" value="DNA_mismatch_S5_2-like"/>
</dbReference>
<dbReference type="InterPro" id="IPR036890">
    <property type="entry name" value="HATPase_C_sf"/>
</dbReference>
<dbReference type="InterPro" id="IPR002099">
    <property type="entry name" value="MutL/Mlh/PMS"/>
</dbReference>
<dbReference type="InterPro" id="IPR038973">
    <property type="entry name" value="MutL/Mlh/Pms-like"/>
</dbReference>
<dbReference type="InterPro" id="IPR014790">
    <property type="entry name" value="MutL_C"/>
</dbReference>
<dbReference type="InterPro" id="IPR042120">
    <property type="entry name" value="MutL_C_dimsub"/>
</dbReference>
<dbReference type="InterPro" id="IPR042121">
    <property type="entry name" value="MutL_C_regsub"/>
</dbReference>
<dbReference type="InterPro" id="IPR037198">
    <property type="entry name" value="MutL_C_sf"/>
</dbReference>
<dbReference type="InterPro" id="IPR020568">
    <property type="entry name" value="Ribosomal_Su5_D2-typ_SF"/>
</dbReference>
<dbReference type="InterPro" id="IPR014721">
    <property type="entry name" value="Ribsml_uS5_D2-typ_fold_subgr"/>
</dbReference>
<dbReference type="NCBIfam" id="TIGR00585">
    <property type="entry name" value="mutl"/>
    <property type="match status" value="1"/>
</dbReference>
<dbReference type="NCBIfam" id="NF000948">
    <property type="entry name" value="PRK00095.1-1"/>
    <property type="match status" value="1"/>
</dbReference>
<dbReference type="PANTHER" id="PTHR10073">
    <property type="entry name" value="DNA MISMATCH REPAIR PROTEIN MLH, PMS, MUTL"/>
    <property type="match status" value="1"/>
</dbReference>
<dbReference type="PANTHER" id="PTHR10073:SF12">
    <property type="entry name" value="DNA MISMATCH REPAIR PROTEIN MLH1"/>
    <property type="match status" value="1"/>
</dbReference>
<dbReference type="Pfam" id="PF01119">
    <property type="entry name" value="DNA_mis_repair"/>
    <property type="match status" value="1"/>
</dbReference>
<dbReference type="Pfam" id="PF13589">
    <property type="entry name" value="HATPase_c_3"/>
    <property type="match status" value="1"/>
</dbReference>
<dbReference type="Pfam" id="PF08676">
    <property type="entry name" value="MutL_C"/>
    <property type="match status" value="1"/>
</dbReference>
<dbReference type="SMART" id="SM01340">
    <property type="entry name" value="DNA_mis_repair"/>
    <property type="match status" value="1"/>
</dbReference>
<dbReference type="SMART" id="SM00853">
    <property type="entry name" value="MutL_C"/>
    <property type="match status" value="1"/>
</dbReference>
<dbReference type="SUPFAM" id="SSF55874">
    <property type="entry name" value="ATPase domain of HSP90 chaperone/DNA topoisomerase II/histidine kinase"/>
    <property type="match status" value="1"/>
</dbReference>
<dbReference type="SUPFAM" id="SSF118116">
    <property type="entry name" value="DNA mismatch repair protein MutL"/>
    <property type="match status" value="1"/>
</dbReference>
<dbReference type="SUPFAM" id="SSF54211">
    <property type="entry name" value="Ribosomal protein S5 domain 2-like"/>
    <property type="match status" value="1"/>
</dbReference>
<dbReference type="PROSITE" id="PS00058">
    <property type="entry name" value="DNA_MISMATCH_REPAIR_1"/>
    <property type="match status" value="1"/>
</dbReference>
<feature type="chain" id="PRO_1000096652" description="DNA mismatch repair protein MutL">
    <location>
        <begin position="1"/>
        <end position="611"/>
    </location>
</feature>
<feature type="region of interest" description="Disordered" evidence="2">
    <location>
        <begin position="353"/>
        <end position="387"/>
    </location>
</feature>
<feature type="compositionally biased region" description="Low complexity" evidence="2">
    <location>
        <begin position="363"/>
        <end position="380"/>
    </location>
</feature>
<sequence length="611" mass="67837">MAIQVLPPQLANQIAAGEVVERPASVVKELVENSLDAGATRIDIDIEKGGAKLIRIRDNGCGIAKDELAMALARHATSKITSLDDLEAIISLGFRGEALASISSVSRLTLTSRTEAQTEAWQAYAEGRDQAVTVKPAAHPVGTTLEVLDLFYNTPARRKFMRTEKTEFTHIDEIIRRIALVRFDVAISLTHNGKLVRQYRAVSDDGQRERRLGAICGTAFLSHALKIDWQHGELSLHGWVADPSGSKALSELQYCYVNGRMMRDRLINHAIRQAYEDKLGDRHQPAYVLYLEIDPHQVDVNVHPAKHEVRFHQSRLVHDFIYQGVVSVLQESGAETLPEIATAQPAERWQPENRQAAGGNHFATPAPAAAPRPASTASSSWQRQEPVYQKREGAAYQQLLQTPTRSEEPPLSPASVTQNDAPALSAHAQSFGRVLTIVREQYALLEGKKGLALLALTVAERWLKQAQLEPGSEGLRPQPLLIPVRLKLDKAERDAGNRCSELLNQMGIDLKFDAHHVMLRAVPLPLRQQNLQNLIPEMLGYLAQHQDVTAFQLAQWFARQSASEHQHWNHSQAITLLAEVERLCPTLVKSPPSGLLQNVDIEMAMNALKHE</sequence>
<gene>
    <name evidence="1" type="primary">mutL</name>
    <name type="ordered locus">ETA_29690</name>
</gene>
<organism>
    <name type="scientific">Erwinia tasmaniensis (strain DSM 17950 / CFBP 7177 / CIP 109463 / NCPPB 4357 / Et1/99)</name>
    <dbReference type="NCBI Taxonomy" id="465817"/>
    <lineage>
        <taxon>Bacteria</taxon>
        <taxon>Pseudomonadati</taxon>
        <taxon>Pseudomonadota</taxon>
        <taxon>Gammaproteobacteria</taxon>
        <taxon>Enterobacterales</taxon>
        <taxon>Erwiniaceae</taxon>
        <taxon>Erwinia</taxon>
    </lineage>
</organism>
<evidence type="ECO:0000255" key="1">
    <source>
        <dbReference type="HAMAP-Rule" id="MF_00149"/>
    </source>
</evidence>
<evidence type="ECO:0000256" key="2">
    <source>
        <dbReference type="SAM" id="MobiDB-lite"/>
    </source>
</evidence>
<protein>
    <recommendedName>
        <fullName evidence="1">DNA mismatch repair protein MutL</fullName>
    </recommendedName>
</protein>
<reference key="1">
    <citation type="journal article" date="2008" name="Environ. Microbiol.">
        <title>The genome of Erwinia tasmaniensis strain Et1/99, a non-pathogenic bacterium in the genus Erwinia.</title>
        <authorList>
            <person name="Kube M."/>
            <person name="Migdoll A.M."/>
            <person name="Mueller I."/>
            <person name="Kuhl H."/>
            <person name="Beck A."/>
            <person name="Reinhardt R."/>
            <person name="Geider K."/>
        </authorList>
    </citation>
    <scope>NUCLEOTIDE SEQUENCE [LARGE SCALE GENOMIC DNA]</scope>
    <source>
        <strain>DSM 17950 / CFBP 7177 / CIP 109463 / NCPPB 4357 / Et1/99</strain>
    </source>
</reference>
<proteinExistence type="inferred from homology"/>
<accession>B2VCU8</accession>
<comment type="function">
    <text evidence="1">This protein is involved in the repair of mismatches in DNA. It is required for dam-dependent methyl-directed DNA mismatch repair. May act as a 'molecular matchmaker', a protein that promotes the formation of a stable complex between two or more DNA-binding proteins in an ATP-dependent manner without itself being part of a final effector complex.</text>
</comment>
<comment type="similarity">
    <text evidence="1">Belongs to the DNA mismatch repair MutL/HexB family.</text>
</comment>